<accession>A1R7I7</accession>
<name>COAD_PAEAT</name>
<evidence type="ECO:0000255" key="1">
    <source>
        <dbReference type="HAMAP-Rule" id="MF_00151"/>
    </source>
</evidence>
<gene>
    <name evidence="1" type="primary">coaD</name>
    <name type="ordered locus">AAur_2473</name>
</gene>
<reference key="1">
    <citation type="journal article" date="2006" name="PLoS Genet.">
        <title>Secrets of soil survival revealed by the genome sequence of Arthrobacter aurescens TC1.</title>
        <authorList>
            <person name="Mongodin E.F."/>
            <person name="Shapir N."/>
            <person name="Daugherty S.C."/>
            <person name="DeBoy R.T."/>
            <person name="Emerson J.B."/>
            <person name="Shvartzbeyn A."/>
            <person name="Radune D."/>
            <person name="Vamathevan J."/>
            <person name="Riggs F."/>
            <person name="Grinberg V."/>
            <person name="Khouri H.M."/>
            <person name="Wackett L.P."/>
            <person name="Nelson K.E."/>
            <person name="Sadowsky M.J."/>
        </authorList>
    </citation>
    <scope>NUCLEOTIDE SEQUENCE [LARGE SCALE GENOMIC DNA]</scope>
    <source>
        <strain>TC1</strain>
    </source>
</reference>
<sequence length="166" mass="18318">MRRAVCPGSFDPIHNGHLEVIARAAGLFDEVIVAVSTNYAKKYRFSLEDRMEMARETLASLRGIIVEPMGEGLLAEYCRHRGVSAIVKGLRSSSDFDYELPMATMNRQLTGVETVFLPAEAHYVHLSSTLIKEVNVLGGDISEYVPKSVLKRLLAGEPPTEPSRKG</sequence>
<comment type="function">
    <text evidence="1">Reversibly transfers an adenylyl group from ATP to 4'-phosphopantetheine, yielding dephospho-CoA (dPCoA) and pyrophosphate.</text>
</comment>
<comment type="catalytic activity">
    <reaction evidence="1">
        <text>(R)-4'-phosphopantetheine + ATP + H(+) = 3'-dephospho-CoA + diphosphate</text>
        <dbReference type="Rhea" id="RHEA:19801"/>
        <dbReference type="ChEBI" id="CHEBI:15378"/>
        <dbReference type="ChEBI" id="CHEBI:30616"/>
        <dbReference type="ChEBI" id="CHEBI:33019"/>
        <dbReference type="ChEBI" id="CHEBI:57328"/>
        <dbReference type="ChEBI" id="CHEBI:61723"/>
        <dbReference type="EC" id="2.7.7.3"/>
    </reaction>
</comment>
<comment type="cofactor">
    <cofactor evidence="1">
        <name>Mg(2+)</name>
        <dbReference type="ChEBI" id="CHEBI:18420"/>
    </cofactor>
</comment>
<comment type="pathway">
    <text evidence="1">Cofactor biosynthesis; coenzyme A biosynthesis; CoA from (R)-pantothenate: step 4/5.</text>
</comment>
<comment type="subunit">
    <text evidence="1">Homohexamer.</text>
</comment>
<comment type="subcellular location">
    <subcellularLocation>
        <location evidence="1">Cytoplasm</location>
    </subcellularLocation>
</comment>
<comment type="similarity">
    <text evidence="1">Belongs to the bacterial CoaD family.</text>
</comment>
<protein>
    <recommendedName>
        <fullName evidence="1">Phosphopantetheine adenylyltransferase</fullName>
        <ecNumber evidence="1">2.7.7.3</ecNumber>
    </recommendedName>
    <alternativeName>
        <fullName evidence="1">Dephospho-CoA pyrophosphorylase</fullName>
    </alternativeName>
    <alternativeName>
        <fullName evidence="1">Pantetheine-phosphate adenylyltransferase</fullName>
        <shortName evidence="1">PPAT</shortName>
    </alternativeName>
</protein>
<proteinExistence type="inferred from homology"/>
<organism>
    <name type="scientific">Paenarthrobacter aurescens (strain TC1)</name>
    <dbReference type="NCBI Taxonomy" id="290340"/>
    <lineage>
        <taxon>Bacteria</taxon>
        <taxon>Bacillati</taxon>
        <taxon>Actinomycetota</taxon>
        <taxon>Actinomycetes</taxon>
        <taxon>Micrococcales</taxon>
        <taxon>Micrococcaceae</taxon>
        <taxon>Paenarthrobacter</taxon>
    </lineage>
</organism>
<keyword id="KW-0067">ATP-binding</keyword>
<keyword id="KW-0173">Coenzyme A biosynthesis</keyword>
<keyword id="KW-0963">Cytoplasm</keyword>
<keyword id="KW-0460">Magnesium</keyword>
<keyword id="KW-0547">Nucleotide-binding</keyword>
<keyword id="KW-0548">Nucleotidyltransferase</keyword>
<keyword id="KW-0808">Transferase</keyword>
<dbReference type="EC" id="2.7.7.3" evidence="1"/>
<dbReference type="EMBL" id="CP000474">
    <property type="protein sequence ID" value="ABM06600.1"/>
    <property type="molecule type" value="Genomic_DNA"/>
</dbReference>
<dbReference type="RefSeq" id="WP_011775141.1">
    <property type="nucleotide sequence ID" value="NC_008711.1"/>
</dbReference>
<dbReference type="SMR" id="A1R7I7"/>
<dbReference type="STRING" id="290340.AAur_2473"/>
<dbReference type="KEGG" id="aau:AAur_2473"/>
<dbReference type="eggNOG" id="COG0669">
    <property type="taxonomic scope" value="Bacteria"/>
</dbReference>
<dbReference type="HOGENOM" id="CLU_100149_1_0_11"/>
<dbReference type="OrthoDB" id="9806661at2"/>
<dbReference type="UniPathway" id="UPA00241">
    <property type="reaction ID" value="UER00355"/>
</dbReference>
<dbReference type="Proteomes" id="UP000000637">
    <property type="component" value="Chromosome"/>
</dbReference>
<dbReference type="GO" id="GO:0005737">
    <property type="term" value="C:cytoplasm"/>
    <property type="evidence" value="ECO:0007669"/>
    <property type="project" value="UniProtKB-SubCell"/>
</dbReference>
<dbReference type="GO" id="GO:0005524">
    <property type="term" value="F:ATP binding"/>
    <property type="evidence" value="ECO:0007669"/>
    <property type="project" value="UniProtKB-KW"/>
</dbReference>
<dbReference type="GO" id="GO:0004595">
    <property type="term" value="F:pantetheine-phosphate adenylyltransferase activity"/>
    <property type="evidence" value="ECO:0007669"/>
    <property type="project" value="UniProtKB-UniRule"/>
</dbReference>
<dbReference type="GO" id="GO:0015937">
    <property type="term" value="P:coenzyme A biosynthetic process"/>
    <property type="evidence" value="ECO:0007669"/>
    <property type="project" value="UniProtKB-UniRule"/>
</dbReference>
<dbReference type="CDD" id="cd02163">
    <property type="entry name" value="PPAT"/>
    <property type="match status" value="1"/>
</dbReference>
<dbReference type="Gene3D" id="3.40.50.620">
    <property type="entry name" value="HUPs"/>
    <property type="match status" value="1"/>
</dbReference>
<dbReference type="HAMAP" id="MF_00151">
    <property type="entry name" value="PPAT_bact"/>
    <property type="match status" value="1"/>
</dbReference>
<dbReference type="InterPro" id="IPR004821">
    <property type="entry name" value="Cyt_trans-like"/>
</dbReference>
<dbReference type="InterPro" id="IPR001980">
    <property type="entry name" value="PPAT"/>
</dbReference>
<dbReference type="InterPro" id="IPR014729">
    <property type="entry name" value="Rossmann-like_a/b/a_fold"/>
</dbReference>
<dbReference type="NCBIfam" id="TIGR01510">
    <property type="entry name" value="coaD_prev_kdtB"/>
    <property type="match status" value="1"/>
</dbReference>
<dbReference type="NCBIfam" id="TIGR00125">
    <property type="entry name" value="cyt_tran_rel"/>
    <property type="match status" value="1"/>
</dbReference>
<dbReference type="PANTHER" id="PTHR21342">
    <property type="entry name" value="PHOSPHOPANTETHEINE ADENYLYLTRANSFERASE"/>
    <property type="match status" value="1"/>
</dbReference>
<dbReference type="PANTHER" id="PTHR21342:SF1">
    <property type="entry name" value="PHOSPHOPANTETHEINE ADENYLYLTRANSFERASE"/>
    <property type="match status" value="1"/>
</dbReference>
<dbReference type="Pfam" id="PF01467">
    <property type="entry name" value="CTP_transf_like"/>
    <property type="match status" value="1"/>
</dbReference>
<dbReference type="PRINTS" id="PR01020">
    <property type="entry name" value="LPSBIOSNTHSS"/>
</dbReference>
<dbReference type="SUPFAM" id="SSF52374">
    <property type="entry name" value="Nucleotidylyl transferase"/>
    <property type="match status" value="1"/>
</dbReference>
<feature type="chain" id="PRO_1000011089" description="Phosphopantetheine adenylyltransferase">
    <location>
        <begin position="1"/>
        <end position="166"/>
    </location>
</feature>
<feature type="binding site" evidence="1">
    <location>
        <begin position="9"/>
        <end position="10"/>
    </location>
    <ligand>
        <name>ATP</name>
        <dbReference type="ChEBI" id="CHEBI:30616"/>
    </ligand>
</feature>
<feature type="binding site" evidence="1">
    <location>
        <position position="9"/>
    </location>
    <ligand>
        <name>substrate</name>
    </ligand>
</feature>
<feature type="binding site" evidence="1">
    <location>
        <position position="17"/>
    </location>
    <ligand>
        <name>ATP</name>
        <dbReference type="ChEBI" id="CHEBI:30616"/>
    </ligand>
</feature>
<feature type="binding site" evidence="1">
    <location>
        <position position="41"/>
    </location>
    <ligand>
        <name>substrate</name>
    </ligand>
</feature>
<feature type="binding site" evidence="1">
    <location>
        <position position="74"/>
    </location>
    <ligand>
        <name>substrate</name>
    </ligand>
</feature>
<feature type="binding site" evidence="1">
    <location>
        <position position="88"/>
    </location>
    <ligand>
        <name>substrate</name>
    </ligand>
</feature>
<feature type="binding site" evidence="1">
    <location>
        <begin position="89"/>
        <end position="91"/>
    </location>
    <ligand>
        <name>ATP</name>
        <dbReference type="ChEBI" id="CHEBI:30616"/>
    </ligand>
</feature>
<feature type="binding site" evidence="1">
    <location>
        <position position="99"/>
    </location>
    <ligand>
        <name>ATP</name>
        <dbReference type="ChEBI" id="CHEBI:30616"/>
    </ligand>
</feature>
<feature type="binding site" evidence="1">
    <location>
        <begin position="123"/>
        <end position="129"/>
    </location>
    <ligand>
        <name>ATP</name>
        <dbReference type="ChEBI" id="CHEBI:30616"/>
    </ligand>
</feature>
<feature type="site" description="Transition state stabilizer" evidence="1">
    <location>
        <position position="17"/>
    </location>
</feature>